<dbReference type="EC" id="2.7.7.7" evidence="1"/>
<dbReference type="EMBL" id="AJ938182">
    <property type="protein sequence ID" value="CAI80815.1"/>
    <property type="molecule type" value="Genomic_DNA"/>
</dbReference>
<dbReference type="SMR" id="Q2YXK4"/>
<dbReference type="KEGG" id="sab:SAB1126"/>
<dbReference type="HOGENOM" id="CLU_003297_0_0_9"/>
<dbReference type="GO" id="GO:0005737">
    <property type="term" value="C:cytoplasm"/>
    <property type="evidence" value="ECO:0007669"/>
    <property type="project" value="UniProtKB-SubCell"/>
</dbReference>
<dbReference type="GO" id="GO:0008408">
    <property type="term" value="F:3'-5' exonuclease activity"/>
    <property type="evidence" value="ECO:0007669"/>
    <property type="project" value="UniProtKB-UniRule"/>
</dbReference>
<dbReference type="GO" id="GO:0003677">
    <property type="term" value="F:DNA binding"/>
    <property type="evidence" value="ECO:0007669"/>
    <property type="project" value="UniProtKB-UniRule"/>
</dbReference>
<dbReference type="GO" id="GO:0003887">
    <property type="term" value="F:DNA-directed DNA polymerase activity"/>
    <property type="evidence" value="ECO:0007669"/>
    <property type="project" value="UniProtKB-UniRule"/>
</dbReference>
<dbReference type="GO" id="GO:0006261">
    <property type="term" value="P:DNA-templated DNA replication"/>
    <property type="evidence" value="ECO:0007669"/>
    <property type="project" value="UniProtKB-UniRule"/>
</dbReference>
<dbReference type="CDD" id="cd06127">
    <property type="entry name" value="DEDDh"/>
    <property type="match status" value="1"/>
</dbReference>
<dbReference type="CDD" id="cd07435">
    <property type="entry name" value="PHP_PolIIIA_POLC"/>
    <property type="match status" value="1"/>
</dbReference>
<dbReference type="CDD" id="cd04484">
    <property type="entry name" value="polC_OBF"/>
    <property type="match status" value="1"/>
</dbReference>
<dbReference type="FunFam" id="3.30.420.10:FF:000045">
    <property type="entry name" value="3'-5' exonuclease DinG"/>
    <property type="match status" value="1"/>
</dbReference>
<dbReference type="Gene3D" id="1.10.150.870">
    <property type="match status" value="1"/>
</dbReference>
<dbReference type="Gene3D" id="3.30.1900.20">
    <property type="match status" value="2"/>
</dbReference>
<dbReference type="Gene3D" id="6.10.140.1510">
    <property type="match status" value="1"/>
</dbReference>
<dbReference type="Gene3D" id="3.20.20.140">
    <property type="entry name" value="Metal-dependent hydrolases"/>
    <property type="match status" value="1"/>
</dbReference>
<dbReference type="Gene3D" id="2.40.50.140">
    <property type="entry name" value="Nucleic acid-binding proteins"/>
    <property type="match status" value="1"/>
</dbReference>
<dbReference type="Gene3D" id="1.10.150.700">
    <property type="entry name" value="PolC, middle finger domain"/>
    <property type="match status" value="1"/>
</dbReference>
<dbReference type="Gene3D" id="3.30.420.10">
    <property type="entry name" value="Ribonuclease H-like superfamily/Ribonuclease H"/>
    <property type="match status" value="1"/>
</dbReference>
<dbReference type="HAMAP" id="MF_00356">
    <property type="entry name" value="DNApol_PolC"/>
    <property type="match status" value="1"/>
</dbReference>
<dbReference type="InterPro" id="IPR011708">
    <property type="entry name" value="DNA_pol3_alpha_NTPase_dom"/>
</dbReference>
<dbReference type="InterPro" id="IPR040982">
    <property type="entry name" value="DNA_pol3_finger"/>
</dbReference>
<dbReference type="InterPro" id="IPR024754">
    <property type="entry name" value="DNA_PolC-like_N_II"/>
</dbReference>
<dbReference type="InterPro" id="IPR028112">
    <property type="entry name" value="DNA_PolC-type_N_I"/>
</dbReference>
<dbReference type="InterPro" id="IPR004805">
    <property type="entry name" value="DnaE2/DnaE/PolC"/>
</dbReference>
<dbReference type="InterPro" id="IPR029460">
    <property type="entry name" value="DNAPol_HHH"/>
</dbReference>
<dbReference type="InterPro" id="IPR006054">
    <property type="entry name" value="DnaQ"/>
</dbReference>
<dbReference type="InterPro" id="IPR013520">
    <property type="entry name" value="Exonuclease_RNaseT/DNA_pol3"/>
</dbReference>
<dbReference type="InterPro" id="IPR012340">
    <property type="entry name" value="NA-bd_OB-fold"/>
</dbReference>
<dbReference type="InterPro" id="IPR004013">
    <property type="entry name" value="PHP_dom"/>
</dbReference>
<dbReference type="InterPro" id="IPR003141">
    <property type="entry name" value="Pol/His_phosphatase_N"/>
</dbReference>
<dbReference type="InterPro" id="IPR006308">
    <property type="entry name" value="Pol_III_a_PolC-type_gram_pos"/>
</dbReference>
<dbReference type="InterPro" id="IPR044923">
    <property type="entry name" value="PolC_middle_finger_sf"/>
</dbReference>
<dbReference type="InterPro" id="IPR012337">
    <property type="entry name" value="RNaseH-like_sf"/>
</dbReference>
<dbReference type="InterPro" id="IPR036397">
    <property type="entry name" value="RNaseH_sf"/>
</dbReference>
<dbReference type="NCBIfam" id="TIGR00573">
    <property type="entry name" value="dnaq"/>
    <property type="match status" value="1"/>
</dbReference>
<dbReference type="NCBIfam" id="TIGR01405">
    <property type="entry name" value="polC_Gram_pos"/>
    <property type="match status" value="1"/>
</dbReference>
<dbReference type="NCBIfam" id="NF001688">
    <property type="entry name" value="PRK00448.1"/>
    <property type="match status" value="1"/>
</dbReference>
<dbReference type="PANTHER" id="PTHR32294:SF5">
    <property type="entry name" value="DNA POLYMERASE III POLC-TYPE"/>
    <property type="match status" value="1"/>
</dbReference>
<dbReference type="PANTHER" id="PTHR32294">
    <property type="entry name" value="DNA POLYMERASE III SUBUNIT ALPHA"/>
    <property type="match status" value="1"/>
</dbReference>
<dbReference type="Pfam" id="PF14480">
    <property type="entry name" value="DNA_pol3_a_NI"/>
    <property type="match status" value="1"/>
</dbReference>
<dbReference type="Pfam" id="PF11490">
    <property type="entry name" value="DNA_pol3_a_NII"/>
    <property type="match status" value="1"/>
</dbReference>
<dbReference type="Pfam" id="PF07733">
    <property type="entry name" value="DNA_pol3_alpha"/>
    <property type="match status" value="2"/>
</dbReference>
<dbReference type="Pfam" id="PF17657">
    <property type="entry name" value="DNA_pol3_finger"/>
    <property type="match status" value="1"/>
</dbReference>
<dbReference type="Pfam" id="PF14579">
    <property type="entry name" value="HHH_6"/>
    <property type="match status" value="1"/>
</dbReference>
<dbReference type="Pfam" id="PF02811">
    <property type="entry name" value="PHP"/>
    <property type="match status" value="2"/>
</dbReference>
<dbReference type="Pfam" id="PF00929">
    <property type="entry name" value="RNase_T"/>
    <property type="match status" value="1"/>
</dbReference>
<dbReference type="SMART" id="SM00479">
    <property type="entry name" value="EXOIII"/>
    <property type="match status" value="1"/>
</dbReference>
<dbReference type="SMART" id="SM00481">
    <property type="entry name" value="POLIIIAc"/>
    <property type="match status" value="1"/>
</dbReference>
<dbReference type="SUPFAM" id="SSF81585">
    <property type="entry name" value="PsbU/PolX domain-like"/>
    <property type="match status" value="1"/>
</dbReference>
<dbReference type="SUPFAM" id="SSF53098">
    <property type="entry name" value="Ribonuclease H-like"/>
    <property type="match status" value="1"/>
</dbReference>
<proteinExistence type="inferred from homology"/>
<accession>Q2YXK4</accession>
<keyword id="KW-0963">Cytoplasm</keyword>
<keyword id="KW-0235">DNA replication</keyword>
<keyword id="KW-0239">DNA-directed DNA polymerase</keyword>
<keyword id="KW-0269">Exonuclease</keyword>
<keyword id="KW-0378">Hydrolase</keyword>
<keyword id="KW-0540">Nuclease</keyword>
<keyword id="KW-0548">Nucleotidyltransferase</keyword>
<keyword id="KW-0808">Transferase</keyword>
<sequence>MAMTEQQKFKVLADQIKISNQLDAEILNSGELTRIDVSNKNRTWEFHITLPQFLAHEDYLLFIHAIEQEFKDIANVTCRFTVTNGTNQDEHAIKYFGHCIDQTALSPKVKGQLKQKKLIMSGKVLKVMVSNDIERNHFDKACNGSLIKAFRNCGFDIDKIIFETNDNDQEQNLASLEAHIQEEDEQSARLATEKLEKMKAEKAKQQDNNESAVDKCQIGKPIQIENIKPIESIIEEEFKVAIEGVIFDINLKELKSGRHIVEIKVTDYTDSLVLKMFTRKNKDDLEHFKALSVGKWVRAQGRIEEDTFIRDLVMMMSDIEEIKKATKKDKAEEKRVEFHLHTAMSQMDGIPNIGAYVKQAADWGHPAIAVTDHNVVQAFPDAHAAAEKHGIKMIYGMEGMLVDDGAPIAYKPQDVVLKDATYVVFDVETTGLSNQYNKIIELAAVKVHNGEIIDKFERFSNPHERLSETIINLTHITDDMLVDAPEIEEVLTEFKEWVGDAIFVAHNASFDMGFIDTGYERLGFGPSTNGVIDTLELSRTINTEYGKHGLNFLAKKYGVELTQHHRAIYDTEATAYIFIKMVQQMKELGVLNHNEINKKLSNQDAYKRARPSHVTLIVQNQQGLKNLFKIVSASLVKYFYRTPRIPRSLLDEYREGLLVGTACDEGELFTAVMQKDQSQVEKIAKYYDFIEIQPPALYQDLIDRELIRDTETLHEIYQRLIHAGDTAGIPVIATGNAHYLFEHDGIARKILIASQPGNPLNRSTLPEAHFRTTDEMLNEFHFLGEEKAHEIVVKNTNELADRIERVVPIKDELYTPRMEGANEEIRELSYANARKLYGEDLPQIVIDRLEKELKSIIGNGFAVIYLISQRLVKKSLDDGYLVGSRGSVGSSFVATMTEITEVNPLPPHYICPNCKTSEFFNDGSVGSGFDLPDKTCETCGAPLIKEGQDIPFETFLGFKGDKVPDIDLNFSGEYQPNAHNYTKVLFGEDKVFRAGTIGTVAEKTAFGYVKGYLNDQGIHKRGAEIDRLVKGCTGVKRTTGQHPGGIIVVPDYMDIYDFTPIQYPADDQNSAWMTTHFDFHSIHDNVLKLDILGHDDPTMIRMLQDLSGIDPKTIPVDDKEVMQIFSTPESLGVTEDEILCKTGTFGVPEFGTGFVRQMLEDTKPTTFSELVQISGLSHGTDVWLGNAQELIKTGICDLSSVIGCRDDIMVYLMYAGLEPSMAFKIMESVRKGKGLTEEMIETMKENEVPDWYLDSCLKIKYMFPKAHAAAYVLMAVRIAYFKVHHPLYYYASYFTIRASDFDLITMIKDKTSIRNTVKDMYSRYMDLGKKEKDVLTVLEIMNEMAHRGYRMQPISLEKSQAFEFIIEGDTLIPPFISVPGLGENVAKRIVEARDDGPFLSKEDLNKKAGLSQKIIEYLDELGSLPNLPDKAQLSIFDM</sequence>
<reference key="1">
    <citation type="journal article" date="2007" name="PLoS ONE">
        <title>Molecular correlates of host specialization in Staphylococcus aureus.</title>
        <authorList>
            <person name="Herron-Olson L."/>
            <person name="Fitzgerald J.R."/>
            <person name="Musser J.M."/>
            <person name="Kapur V."/>
        </authorList>
    </citation>
    <scope>NUCLEOTIDE SEQUENCE [LARGE SCALE GENOMIC DNA]</scope>
    <source>
        <strain>bovine RF122 / ET3-1</strain>
    </source>
</reference>
<comment type="function">
    <text evidence="1">Required for replicative DNA synthesis. This DNA polymerase also exhibits 3' to 5' exonuclease activity.</text>
</comment>
<comment type="catalytic activity">
    <reaction evidence="1">
        <text>DNA(n) + a 2'-deoxyribonucleoside 5'-triphosphate = DNA(n+1) + diphosphate</text>
        <dbReference type="Rhea" id="RHEA:22508"/>
        <dbReference type="Rhea" id="RHEA-COMP:17339"/>
        <dbReference type="Rhea" id="RHEA-COMP:17340"/>
        <dbReference type="ChEBI" id="CHEBI:33019"/>
        <dbReference type="ChEBI" id="CHEBI:61560"/>
        <dbReference type="ChEBI" id="CHEBI:173112"/>
        <dbReference type="EC" id="2.7.7.7"/>
    </reaction>
</comment>
<comment type="subcellular location">
    <subcellularLocation>
        <location evidence="1">Cytoplasm</location>
    </subcellularLocation>
</comment>
<comment type="similarity">
    <text evidence="1">Belongs to the DNA polymerase type-C family. PolC subfamily.</text>
</comment>
<evidence type="ECO:0000255" key="1">
    <source>
        <dbReference type="HAMAP-Rule" id="MF_00356"/>
    </source>
</evidence>
<feature type="chain" id="PRO_1000048480" description="DNA polymerase III PolC-type">
    <location>
        <begin position="1"/>
        <end position="1438"/>
    </location>
</feature>
<feature type="domain" description="Exonuclease">
    <location>
        <begin position="422"/>
        <end position="578"/>
    </location>
</feature>
<gene>
    <name evidence="1" type="primary">polC</name>
    <name type="ordered locus">SAB1126</name>
</gene>
<organism>
    <name type="scientific">Staphylococcus aureus (strain bovine RF122 / ET3-1)</name>
    <dbReference type="NCBI Taxonomy" id="273036"/>
    <lineage>
        <taxon>Bacteria</taxon>
        <taxon>Bacillati</taxon>
        <taxon>Bacillota</taxon>
        <taxon>Bacilli</taxon>
        <taxon>Bacillales</taxon>
        <taxon>Staphylococcaceae</taxon>
        <taxon>Staphylococcus</taxon>
    </lineage>
</organism>
<name>DPO3_STAAB</name>
<protein>
    <recommendedName>
        <fullName evidence="1">DNA polymerase III PolC-type</fullName>
        <shortName evidence="1">PolIII</shortName>
        <ecNumber evidence="1">2.7.7.7</ecNumber>
    </recommendedName>
</protein>